<organism>
    <name type="scientific">Rattus norvegicus</name>
    <name type="common">Rat</name>
    <dbReference type="NCBI Taxonomy" id="10116"/>
    <lineage>
        <taxon>Eukaryota</taxon>
        <taxon>Metazoa</taxon>
        <taxon>Chordata</taxon>
        <taxon>Craniata</taxon>
        <taxon>Vertebrata</taxon>
        <taxon>Euteleostomi</taxon>
        <taxon>Mammalia</taxon>
        <taxon>Eutheria</taxon>
        <taxon>Euarchontoglires</taxon>
        <taxon>Glires</taxon>
        <taxon>Rodentia</taxon>
        <taxon>Myomorpha</taxon>
        <taxon>Muroidea</taxon>
        <taxon>Muridae</taxon>
        <taxon>Murinae</taxon>
        <taxon>Rattus</taxon>
    </lineage>
</organism>
<gene>
    <name type="primary">Padi3</name>
    <name type="synonym">Pad3</name>
    <name type="synonym">Pdi3</name>
</gene>
<name>PADI3_RAT</name>
<sequence length="664" mass="75038">MSLQRTVRVSLEHPTSAVCVAGVETIVDIYGSVPEGTDMFEVYGTPGVDIYVSPSMERNRERADTRRWCFNKGLEIIVVMNSPSNDLNDSHVQIAYHSSHEHLPLAYAVLYLTCVDITLDCDMNCADRQDRSFVDKRQWMWGPDGYGAILLVNCDRDEVSSDAQDNCDQCVRCLQDLEDMSVMVLRTQGPESLFDDHRLILHTSSCDAERARVFHVCGPEDSCEAYRCVLGPDRMSYEVPRLKGYEERFYVEGLSFPDAGFPGILSFHITLLDDSNEDYSETPIFTDTVVFRVAPWIMTPSTLPPLEVYVCQVRNNTCFVEAVEELARKAGCKLTICPQAENRNDRWIQDEMELGYTQAPHKTLPVVFDSPRNGELQGFPYKRILGLDFGYVTREPPDSSVSGLDSFGNLEVSPPVVANGKEYPLGRILIGGNLPGSRGRRVTQVVRDFLHAQKVQPLVELFVDWLAVGHVDEFLSFVPAPDGKGFRLLLASPGACFRLFQEKQKWGHGRSLLFEGVIGDRRVQTISINQVLSNQSLINFNKFAQSCIDWNREVLKRELGLGESDIIDIPQLFKSEKRKAVAFFPDLVNMLVLGKHLGIPKPFGPIINGRCCLEEKVRSLLEPLGLHCTFIDDFTPYHMLHGEVHCGTNVRREPFAFKWWHMVP</sequence>
<dbReference type="EC" id="3.5.3.15" evidence="1"/>
<dbReference type="EMBL" id="D88034">
    <property type="protein sequence ID" value="BAA13532.1"/>
    <property type="molecule type" value="mRNA"/>
</dbReference>
<dbReference type="PIR" id="JC5440">
    <property type="entry name" value="JC5440"/>
</dbReference>
<dbReference type="RefSeq" id="NP_058926.1">
    <property type="nucleotide sequence ID" value="NM_017230.2"/>
</dbReference>
<dbReference type="SMR" id="P70708"/>
<dbReference type="FunCoup" id="P70708">
    <property type="interactions" value="8"/>
</dbReference>
<dbReference type="STRING" id="10116.ENSRNOP00000009230"/>
<dbReference type="iPTMnet" id="P70708"/>
<dbReference type="PhosphoSitePlus" id="P70708"/>
<dbReference type="PaxDb" id="10116-ENSRNOP00000009230"/>
<dbReference type="GeneID" id="29520"/>
<dbReference type="KEGG" id="rno:29520"/>
<dbReference type="UCSC" id="RGD:3289">
    <property type="organism name" value="rat"/>
</dbReference>
<dbReference type="AGR" id="RGD:3289"/>
<dbReference type="CTD" id="51702"/>
<dbReference type="RGD" id="3289">
    <property type="gene designation" value="Padi3"/>
</dbReference>
<dbReference type="eggNOG" id="ENOG502QVJA">
    <property type="taxonomic scope" value="Eukaryota"/>
</dbReference>
<dbReference type="InParanoid" id="P70708"/>
<dbReference type="OrthoDB" id="15386at9989"/>
<dbReference type="PhylomeDB" id="P70708"/>
<dbReference type="BRENDA" id="3.5.3.15">
    <property type="organism ID" value="5301"/>
</dbReference>
<dbReference type="Reactome" id="R-RNO-3247509">
    <property type="pathway name" value="Chromatin modifying enzymes"/>
</dbReference>
<dbReference type="PRO" id="PR:P70708"/>
<dbReference type="Proteomes" id="UP000002494">
    <property type="component" value="Unplaced"/>
</dbReference>
<dbReference type="GO" id="GO:0005737">
    <property type="term" value="C:cytoplasm"/>
    <property type="evidence" value="ECO:0000250"/>
    <property type="project" value="UniProtKB"/>
</dbReference>
<dbReference type="GO" id="GO:0005634">
    <property type="term" value="C:nucleus"/>
    <property type="evidence" value="ECO:0000318"/>
    <property type="project" value="GO_Central"/>
</dbReference>
<dbReference type="GO" id="GO:0005509">
    <property type="term" value="F:calcium ion binding"/>
    <property type="evidence" value="ECO:0007669"/>
    <property type="project" value="InterPro"/>
</dbReference>
<dbReference type="GO" id="GO:0042802">
    <property type="term" value="F:identical protein binding"/>
    <property type="evidence" value="ECO:0000266"/>
    <property type="project" value="RGD"/>
</dbReference>
<dbReference type="GO" id="GO:0004668">
    <property type="term" value="F:protein-arginine deiminase activity"/>
    <property type="evidence" value="ECO:0000314"/>
    <property type="project" value="UniProtKB"/>
</dbReference>
<dbReference type="GO" id="GO:0019546">
    <property type="term" value="P:arginine deiminase pathway"/>
    <property type="evidence" value="ECO:0000303"/>
    <property type="project" value="RGD"/>
</dbReference>
<dbReference type="CDD" id="cd04214">
    <property type="entry name" value="PAD_N"/>
    <property type="match status" value="1"/>
</dbReference>
<dbReference type="FunFam" id="2.60.40.1860:FF:000002">
    <property type="entry name" value="Peptidyl arginine deiminase 3"/>
    <property type="match status" value="1"/>
</dbReference>
<dbReference type="FunFam" id="2.60.40.1700:FF:000001">
    <property type="entry name" value="Protein-arginine deiminase type-2"/>
    <property type="match status" value="1"/>
</dbReference>
<dbReference type="FunFam" id="3.75.10.10:FF:000003">
    <property type="entry name" value="Protein-arginine deiminase type-2"/>
    <property type="match status" value="1"/>
</dbReference>
<dbReference type="Gene3D" id="3.75.10.10">
    <property type="entry name" value="L-arginine/glycine Amidinotransferase, Chain A"/>
    <property type="match status" value="1"/>
</dbReference>
<dbReference type="Gene3D" id="2.60.40.1700">
    <property type="entry name" value="Protein-arginine deiminase, central domain"/>
    <property type="match status" value="1"/>
</dbReference>
<dbReference type="Gene3D" id="2.60.40.1860">
    <property type="entry name" value="Protein-arginine deiminase, N-terminal domain"/>
    <property type="match status" value="1"/>
</dbReference>
<dbReference type="InterPro" id="IPR008972">
    <property type="entry name" value="Cupredoxin"/>
</dbReference>
<dbReference type="InterPro" id="IPR004303">
    <property type="entry name" value="PAD"/>
</dbReference>
<dbReference type="InterPro" id="IPR013530">
    <property type="entry name" value="PAD_C"/>
</dbReference>
<dbReference type="InterPro" id="IPR036556">
    <property type="entry name" value="PAD_central_sf"/>
</dbReference>
<dbReference type="InterPro" id="IPR013732">
    <property type="entry name" value="PAD_N"/>
</dbReference>
<dbReference type="InterPro" id="IPR038685">
    <property type="entry name" value="PAD_N_sf"/>
</dbReference>
<dbReference type="InterPro" id="IPR013733">
    <property type="entry name" value="Prot_Arg_deaminase_cen_dom"/>
</dbReference>
<dbReference type="PANTHER" id="PTHR10837">
    <property type="entry name" value="PEPTIDYLARGININE DEIMINASE"/>
    <property type="match status" value="1"/>
</dbReference>
<dbReference type="PANTHER" id="PTHR10837:SF21">
    <property type="entry name" value="PROTEIN-ARGININE DEIMINASE TYPE-3"/>
    <property type="match status" value="1"/>
</dbReference>
<dbReference type="Pfam" id="PF03068">
    <property type="entry name" value="PAD"/>
    <property type="match status" value="1"/>
</dbReference>
<dbReference type="Pfam" id="PF08527">
    <property type="entry name" value="PAD_M"/>
    <property type="match status" value="1"/>
</dbReference>
<dbReference type="Pfam" id="PF08526">
    <property type="entry name" value="PAD_N"/>
    <property type="match status" value="1"/>
</dbReference>
<dbReference type="PIRSF" id="PIRSF001247">
    <property type="entry name" value="Protein-arginine_deiminase"/>
    <property type="match status" value="1"/>
</dbReference>
<dbReference type="SUPFAM" id="SSF49503">
    <property type="entry name" value="Cupredoxins"/>
    <property type="match status" value="1"/>
</dbReference>
<dbReference type="SUPFAM" id="SSF55909">
    <property type="entry name" value="Pentein"/>
    <property type="match status" value="1"/>
</dbReference>
<dbReference type="SUPFAM" id="SSF110083">
    <property type="entry name" value="Peptidylarginine deiminase Pad4, middle domain"/>
    <property type="match status" value="1"/>
</dbReference>
<accession>P70708</accession>
<feature type="chain" id="PRO_0000220031" description="Protein-arginine deiminase type-3">
    <location>
        <begin position="1"/>
        <end position="664"/>
    </location>
</feature>
<keyword id="KW-0106">Calcium</keyword>
<keyword id="KW-0963">Cytoplasm</keyword>
<keyword id="KW-0378">Hydrolase</keyword>
<keyword id="KW-1185">Reference proteome</keyword>
<evidence type="ECO:0000250" key="1">
    <source>
        <dbReference type="UniProtKB" id="Q9ULW8"/>
    </source>
</evidence>
<evidence type="ECO:0000305" key="2"/>
<protein>
    <recommendedName>
        <fullName>Protein-arginine deiminase type-3</fullName>
        <ecNumber evidence="1">3.5.3.15</ecNumber>
    </recommendedName>
    <alternativeName>
        <fullName>Peptidylarginine deiminase III</fullName>
    </alternativeName>
    <alternativeName>
        <fullName>Protein-arginine deiminase type III</fullName>
    </alternativeName>
</protein>
<reference key="1">
    <citation type="journal article" date="1997" name="J. Biochem.">
        <title>Isolation and molecular cloning of epidermal- and hair follicle-specific peptidylarginine deiminase (type III) from rat.</title>
        <authorList>
            <person name="Nishijyo T."/>
            <person name="Kawada A."/>
            <person name="Kanno T."/>
            <person name="Shiraiwa M."/>
            <person name="Takahara H."/>
        </authorList>
    </citation>
    <scope>NUCLEOTIDE SEQUENCE [MRNA]</scope>
    <source>
        <tissue>Epidermis</tissue>
    </source>
</reference>
<comment type="function">
    <text evidence="1">Catalyzes the deimination of arginine residues of proteins.</text>
</comment>
<comment type="catalytic activity">
    <reaction evidence="1">
        <text>L-arginyl-[protein] + H2O = L-citrullyl-[protein] + NH4(+)</text>
        <dbReference type="Rhea" id="RHEA:18089"/>
        <dbReference type="Rhea" id="RHEA-COMP:10532"/>
        <dbReference type="Rhea" id="RHEA-COMP:10588"/>
        <dbReference type="ChEBI" id="CHEBI:15377"/>
        <dbReference type="ChEBI" id="CHEBI:28938"/>
        <dbReference type="ChEBI" id="CHEBI:29965"/>
        <dbReference type="ChEBI" id="CHEBI:83397"/>
        <dbReference type="EC" id="3.5.3.15"/>
    </reaction>
</comment>
<comment type="cofactor">
    <cofactor>
        <name>Ca(2+)</name>
        <dbReference type="ChEBI" id="CHEBI:29108"/>
    </cofactor>
</comment>
<comment type="subcellular location">
    <subcellularLocation>
        <location evidence="1">Cytoplasm</location>
    </subcellularLocation>
</comment>
<comment type="tissue specificity">
    <text>Epidermis and hair follicles.</text>
</comment>
<comment type="similarity">
    <text evidence="2">Belongs to the protein arginine deiminase family.</text>
</comment>
<proteinExistence type="evidence at transcript level"/>